<organism>
    <name type="scientific">Listeria innocua serovar 6a (strain ATCC BAA-680 / CLIP 11262)</name>
    <dbReference type="NCBI Taxonomy" id="272626"/>
    <lineage>
        <taxon>Bacteria</taxon>
        <taxon>Bacillati</taxon>
        <taxon>Bacillota</taxon>
        <taxon>Bacilli</taxon>
        <taxon>Bacillales</taxon>
        <taxon>Listeriaceae</taxon>
        <taxon>Listeria</taxon>
    </lineage>
</organism>
<dbReference type="EC" id="2.1.1.-" evidence="1"/>
<dbReference type="EMBL" id="AL596174">
    <property type="protein sequence ID" value="CAC98159.1"/>
    <property type="molecule type" value="Genomic_DNA"/>
</dbReference>
<dbReference type="PIR" id="AG1798">
    <property type="entry name" value="AG1798"/>
</dbReference>
<dbReference type="RefSeq" id="WP_010991458.1">
    <property type="nucleotide sequence ID" value="NC_003212.1"/>
</dbReference>
<dbReference type="SMR" id="Q926V6"/>
<dbReference type="STRING" id="272626.gene:17567320"/>
<dbReference type="KEGG" id="lin:gidB"/>
<dbReference type="eggNOG" id="COG0357">
    <property type="taxonomic scope" value="Bacteria"/>
</dbReference>
<dbReference type="HOGENOM" id="CLU_065341_0_2_9"/>
<dbReference type="OrthoDB" id="9808773at2"/>
<dbReference type="Proteomes" id="UP000002513">
    <property type="component" value="Chromosome"/>
</dbReference>
<dbReference type="GO" id="GO:0005829">
    <property type="term" value="C:cytosol"/>
    <property type="evidence" value="ECO:0007669"/>
    <property type="project" value="TreeGrafter"/>
</dbReference>
<dbReference type="GO" id="GO:0070043">
    <property type="term" value="F:rRNA (guanine-N7-)-methyltransferase activity"/>
    <property type="evidence" value="ECO:0007669"/>
    <property type="project" value="UniProtKB-UniRule"/>
</dbReference>
<dbReference type="CDD" id="cd02440">
    <property type="entry name" value="AdoMet_MTases"/>
    <property type="match status" value="1"/>
</dbReference>
<dbReference type="FunFam" id="3.40.50.150:FF:000041">
    <property type="entry name" value="Ribosomal RNA small subunit methyltransferase G"/>
    <property type="match status" value="1"/>
</dbReference>
<dbReference type="Gene3D" id="3.40.50.150">
    <property type="entry name" value="Vaccinia Virus protein VP39"/>
    <property type="match status" value="1"/>
</dbReference>
<dbReference type="HAMAP" id="MF_00074">
    <property type="entry name" value="16SrRNA_methyltr_G"/>
    <property type="match status" value="1"/>
</dbReference>
<dbReference type="InterPro" id="IPR003682">
    <property type="entry name" value="rRNA_ssu_MeTfrase_G"/>
</dbReference>
<dbReference type="InterPro" id="IPR029063">
    <property type="entry name" value="SAM-dependent_MTases_sf"/>
</dbReference>
<dbReference type="NCBIfam" id="TIGR00138">
    <property type="entry name" value="rsmG_gidB"/>
    <property type="match status" value="1"/>
</dbReference>
<dbReference type="PANTHER" id="PTHR31760">
    <property type="entry name" value="S-ADENOSYL-L-METHIONINE-DEPENDENT METHYLTRANSFERASES SUPERFAMILY PROTEIN"/>
    <property type="match status" value="1"/>
</dbReference>
<dbReference type="PANTHER" id="PTHR31760:SF0">
    <property type="entry name" value="S-ADENOSYL-L-METHIONINE-DEPENDENT METHYLTRANSFERASES SUPERFAMILY PROTEIN"/>
    <property type="match status" value="1"/>
</dbReference>
<dbReference type="Pfam" id="PF02527">
    <property type="entry name" value="GidB"/>
    <property type="match status" value="1"/>
</dbReference>
<dbReference type="PIRSF" id="PIRSF003078">
    <property type="entry name" value="GidB"/>
    <property type="match status" value="1"/>
</dbReference>
<dbReference type="SUPFAM" id="SSF53335">
    <property type="entry name" value="S-adenosyl-L-methionine-dependent methyltransferases"/>
    <property type="match status" value="1"/>
</dbReference>
<feature type="chain" id="PRO_0000184274" description="Ribosomal RNA small subunit methyltransferase G">
    <location>
        <begin position="1"/>
        <end position="238"/>
    </location>
</feature>
<feature type="binding site" evidence="1">
    <location>
        <position position="77"/>
    </location>
    <ligand>
        <name>S-adenosyl-L-methionine</name>
        <dbReference type="ChEBI" id="CHEBI:59789"/>
    </ligand>
</feature>
<feature type="binding site" evidence="1">
    <location>
        <position position="82"/>
    </location>
    <ligand>
        <name>S-adenosyl-L-methionine</name>
        <dbReference type="ChEBI" id="CHEBI:59789"/>
    </ligand>
</feature>
<feature type="binding site" evidence="1">
    <location>
        <begin position="128"/>
        <end position="129"/>
    </location>
    <ligand>
        <name>S-adenosyl-L-methionine</name>
        <dbReference type="ChEBI" id="CHEBI:59789"/>
    </ligand>
</feature>
<feature type="binding site" evidence="1">
    <location>
        <position position="147"/>
    </location>
    <ligand>
        <name>S-adenosyl-L-methionine</name>
        <dbReference type="ChEBI" id="CHEBI:59789"/>
    </ligand>
</feature>
<gene>
    <name evidence="1" type="primary">rsmG</name>
    <name type="ordered locus">lin2934</name>
</gene>
<reference key="1">
    <citation type="journal article" date="2001" name="Science">
        <title>Comparative genomics of Listeria species.</title>
        <authorList>
            <person name="Glaser P."/>
            <person name="Frangeul L."/>
            <person name="Buchrieser C."/>
            <person name="Rusniok C."/>
            <person name="Amend A."/>
            <person name="Baquero F."/>
            <person name="Berche P."/>
            <person name="Bloecker H."/>
            <person name="Brandt P."/>
            <person name="Chakraborty T."/>
            <person name="Charbit A."/>
            <person name="Chetouani F."/>
            <person name="Couve E."/>
            <person name="de Daruvar A."/>
            <person name="Dehoux P."/>
            <person name="Domann E."/>
            <person name="Dominguez-Bernal G."/>
            <person name="Duchaud E."/>
            <person name="Durant L."/>
            <person name="Dussurget O."/>
            <person name="Entian K.-D."/>
            <person name="Fsihi H."/>
            <person name="Garcia-del Portillo F."/>
            <person name="Garrido P."/>
            <person name="Gautier L."/>
            <person name="Goebel W."/>
            <person name="Gomez-Lopez N."/>
            <person name="Hain T."/>
            <person name="Hauf J."/>
            <person name="Jackson D."/>
            <person name="Jones L.-M."/>
            <person name="Kaerst U."/>
            <person name="Kreft J."/>
            <person name="Kuhn M."/>
            <person name="Kunst F."/>
            <person name="Kurapkat G."/>
            <person name="Madueno E."/>
            <person name="Maitournam A."/>
            <person name="Mata Vicente J."/>
            <person name="Ng E."/>
            <person name="Nedjari H."/>
            <person name="Nordsiek G."/>
            <person name="Novella S."/>
            <person name="de Pablos B."/>
            <person name="Perez-Diaz J.-C."/>
            <person name="Purcell R."/>
            <person name="Remmel B."/>
            <person name="Rose M."/>
            <person name="Schlueter T."/>
            <person name="Simoes N."/>
            <person name="Tierrez A."/>
            <person name="Vazquez-Boland J.-A."/>
            <person name="Voss H."/>
            <person name="Wehland J."/>
            <person name="Cossart P."/>
        </authorList>
    </citation>
    <scope>NUCLEOTIDE SEQUENCE [LARGE SCALE GENOMIC DNA]</scope>
    <source>
        <strain>ATCC BAA-680 / CLIP 11262</strain>
    </source>
</reference>
<protein>
    <recommendedName>
        <fullName evidence="1">Ribosomal RNA small subunit methyltransferase G</fullName>
        <ecNumber evidence="1">2.1.1.-</ecNumber>
    </recommendedName>
    <alternativeName>
        <fullName evidence="1">16S rRNA 7-methylguanosine methyltransferase</fullName>
        <shortName evidence="1">16S rRNA m7G methyltransferase</shortName>
    </alternativeName>
</protein>
<keyword id="KW-0963">Cytoplasm</keyword>
<keyword id="KW-0489">Methyltransferase</keyword>
<keyword id="KW-0698">rRNA processing</keyword>
<keyword id="KW-0949">S-adenosyl-L-methionine</keyword>
<keyword id="KW-0808">Transferase</keyword>
<name>RSMG_LISIN</name>
<evidence type="ECO:0000255" key="1">
    <source>
        <dbReference type="HAMAP-Rule" id="MF_00074"/>
    </source>
</evidence>
<sequence>MNPEQFQMALAEKGIELSDDQMKQFHDYFKMLVEWNEKMNLTAITDEKEVYLKHFYDSISAAFYVDFTKFDTICDVGAGAGFPSLPIKICFPHLKVSIVDSLKKRMTFLDALAEKLGLTDVHFYHDRAETFGQNKAHREKYDLVTARAVARMSVLSELCMPLVKKGGSFLVMKAAQAEQELQTAEKAIKLFGGKVEEHFAFALPVEESERNIYVITKTKETPNKYPRKPGTPNKLPIE</sequence>
<comment type="function">
    <text evidence="1">Specifically methylates the N7 position of guanine in position 535 of 16S rRNA.</text>
</comment>
<comment type="subcellular location">
    <subcellularLocation>
        <location evidence="1">Cytoplasm</location>
    </subcellularLocation>
</comment>
<comment type="similarity">
    <text evidence="1">Belongs to the methyltransferase superfamily. RNA methyltransferase RsmG family.</text>
</comment>
<proteinExistence type="inferred from homology"/>
<accession>Q926V6</accession>